<keyword id="KW-0030">Aminoacyl-tRNA synthetase</keyword>
<keyword id="KW-0067">ATP-binding</keyword>
<keyword id="KW-0963">Cytoplasm</keyword>
<keyword id="KW-0436">Ligase</keyword>
<keyword id="KW-0479">Metal-binding</keyword>
<keyword id="KW-0547">Nucleotide-binding</keyword>
<keyword id="KW-0648">Protein biosynthesis</keyword>
<keyword id="KW-1185">Reference proteome</keyword>
<keyword id="KW-0694">RNA-binding</keyword>
<keyword id="KW-0820">tRNA-binding</keyword>
<keyword id="KW-0862">Zinc</keyword>
<accession>A5U5W5</accession>
<evidence type="ECO:0000255" key="1">
    <source>
        <dbReference type="HAMAP-Rule" id="MF_00184"/>
    </source>
</evidence>
<evidence type="ECO:0000255" key="2">
    <source>
        <dbReference type="PROSITE-ProRule" id="PRU01228"/>
    </source>
</evidence>
<evidence type="ECO:0000256" key="3">
    <source>
        <dbReference type="SAM" id="MobiDB-lite"/>
    </source>
</evidence>
<sequence length="692" mass="77122">MSAPAQPAPGVDGGDPSQARIRVPAGTTAATAVGEAGLPRRGTPDAIVVVRDADGNLRDLSWVPDVDTDITPVAANTDDGRSVIRHSTAHVLAQAVQELFPQAKLGIGPPITDGFYYDFDVPEPFTPEDLAALEKRMRQIVKEGQLFDRRVYESTEQARAELANEPYKLELVDDKSGDAEIMEVGGDELTAYDNLNPRTRERVWGDLCRGPHIPTTKHIPAFKLTRSSAAYWRGDQKNASLQRIYGTAWESQEALDRHLEFIEEAQRRDHRKLGVELDLFSFPDEIGSGLAVFHPKGGIVRRELEDYSRRKHTEAGYQFVNSPHITKAQLFHTSGHLDWYADGMFPPMHIDAEYNADGSLRKPGQDYYLKPMNCPMHCLIFRARGRSYRELPLRLFEFGTVYRYEKSGVVHGLTRVRGLTMDDAHIFCTRDQMRDELRSLLRFVLDLLADYGLTDFYLELSTKDPEKFVGAEEVWEEATTVLAEVGAESGLELVPDPGGAAFYGPKISVQVKDALGRTWQMSTIQLDFNFPERFGLEYTAADGTRHRPVMIHRALFGSIERFFGILTEHYAGAFPAWLAPVQVVGIPVADEHVAYLEEVATQLKSHGVRAEVDASDDRMAKKIVHHTNHKVPFMVLAGDRDVAAGAVSFRFGDRTQINGVARDDAVAAIVAWIADRENAVPTAELVKVAGRE</sequence>
<feature type="chain" id="PRO_1000020444" description="Threonine--tRNA ligase">
    <location>
        <begin position="1"/>
        <end position="692"/>
    </location>
</feature>
<feature type="domain" description="TGS" evidence="2">
    <location>
        <begin position="1"/>
        <end position="74"/>
    </location>
</feature>
<feature type="region of interest" description="Disordered" evidence="3">
    <location>
        <begin position="1"/>
        <end position="20"/>
    </location>
</feature>
<feature type="region of interest" description="Catalytic" evidence="1">
    <location>
        <begin position="269"/>
        <end position="575"/>
    </location>
</feature>
<feature type="binding site" evidence="1">
    <location>
        <position position="374"/>
    </location>
    <ligand>
        <name>Zn(2+)</name>
        <dbReference type="ChEBI" id="CHEBI:29105"/>
    </ligand>
</feature>
<feature type="binding site" evidence="1">
    <location>
        <position position="425"/>
    </location>
    <ligand>
        <name>Zn(2+)</name>
        <dbReference type="ChEBI" id="CHEBI:29105"/>
    </ligand>
</feature>
<feature type="binding site" evidence="1">
    <location>
        <position position="552"/>
    </location>
    <ligand>
        <name>Zn(2+)</name>
        <dbReference type="ChEBI" id="CHEBI:29105"/>
    </ligand>
</feature>
<protein>
    <recommendedName>
        <fullName evidence="1">Threonine--tRNA ligase</fullName>
        <ecNumber evidence="1">6.1.1.3</ecNumber>
    </recommendedName>
    <alternativeName>
        <fullName evidence="1">Threonyl-tRNA synthetase</fullName>
        <shortName evidence="1">ThrRS</shortName>
    </alternativeName>
</protein>
<name>SYT_MYCTA</name>
<reference key="1">
    <citation type="journal article" date="2008" name="PLoS ONE">
        <title>Genetic basis of virulence attenuation revealed by comparative genomic analysis of Mycobacterium tuberculosis strain H37Ra versus H37Rv.</title>
        <authorList>
            <person name="Zheng H."/>
            <person name="Lu L."/>
            <person name="Wang B."/>
            <person name="Pu S."/>
            <person name="Zhang X."/>
            <person name="Zhu G."/>
            <person name="Shi W."/>
            <person name="Zhang L."/>
            <person name="Wang H."/>
            <person name="Wang S."/>
            <person name="Zhao G."/>
            <person name="Zhang Y."/>
        </authorList>
    </citation>
    <scope>NUCLEOTIDE SEQUENCE [LARGE SCALE GENOMIC DNA]</scope>
    <source>
        <strain>ATCC 25177 / H37Ra</strain>
    </source>
</reference>
<comment type="function">
    <text evidence="1">Catalyzes the attachment of threonine to tRNA(Thr) in a two-step reaction: L-threonine is first activated by ATP to form Thr-AMP and then transferred to the acceptor end of tRNA(Thr). Also edits incorrectly charged L-seryl-tRNA(Thr).</text>
</comment>
<comment type="catalytic activity">
    <reaction evidence="1">
        <text>tRNA(Thr) + L-threonine + ATP = L-threonyl-tRNA(Thr) + AMP + diphosphate + H(+)</text>
        <dbReference type="Rhea" id="RHEA:24624"/>
        <dbReference type="Rhea" id="RHEA-COMP:9670"/>
        <dbReference type="Rhea" id="RHEA-COMP:9704"/>
        <dbReference type="ChEBI" id="CHEBI:15378"/>
        <dbReference type="ChEBI" id="CHEBI:30616"/>
        <dbReference type="ChEBI" id="CHEBI:33019"/>
        <dbReference type="ChEBI" id="CHEBI:57926"/>
        <dbReference type="ChEBI" id="CHEBI:78442"/>
        <dbReference type="ChEBI" id="CHEBI:78534"/>
        <dbReference type="ChEBI" id="CHEBI:456215"/>
        <dbReference type="EC" id="6.1.1.3"/>
    </reaction>
</comment>
<comment type="cofactor">
    <cofactor evidence="1">
        <name>Zn(2+)</name>
        <dbReference type="ChEBI" id="CHEBI:29105"/>
    </cofactor>
    <text evidence="1">Binds 1 zinc ion per subunit.</text>
</comment>
<comment type="subunit">
    <text evidence="1">Homodimer.</text>
</comment>
<comment type="subcellular location">
    <subcellularLocation>
        <location evidence="1">Cytoplasm</location>
    </subcellularLocation>
</comment>
<comment type="similarity">
    <text evidence="1">Belongs to the class-II aminoacyl-tRNA synthetase family.</text>
</comment>
<gene>
    <name evidence="1" type="primary">thrS</name>
    <name type="ordered locus">MRA_2642</name>
</gene>
<organism>
    <name type="scientific">Mycobacterium tuberculosis (strain ATCC 25177 / H37Ra)</name>
    <dbReference type="NCBI Taxonomy" id="419947"/>
    <lineage>
        <taxon>Bacteria</taxon>
        <taxon>Bacillati</taxon>
        <taxon>Actinomycetota</taxon>
        <taxon>Actinomycetes</taxon>
        <taxon>Mycobacteriales</taxon>
        <taxon>Mycobacteriaceae</taxon>
        <taxon>Mycobacterium</taxon>
        <taxon>Mycobacterium tuberculosis complex</taxon>
    </lineage>
</organism>
<dbReference type="EC" id="6.1.1.3" evidence="1"/>
<dbReference type="EMBL" id="CP000611">
    <property type="protein sequence ID" value="ABQ74415.1"/>
    <property type="molecule type" value="Genomic_DNA"/>
</dbReference>
<dbReference type="RefSeq" id="WP_003413486.1">
    <property type="nucleotide sequence ID" value="NZ_CP016972.1"/>
</dbReference>
<dbReference type="SMR" id="A5U5W5"/>
<dbReference type="KEGG" id="mra:MRA_2642"/>
<dbReference type="eggNOG" id="COG0441">
    <property type="taxonomic scope" value="Bacteria"/>
</dbReference>
<dbReference type="HOGENOM" id="CLU_008554_0_1_11"/>
<dbReference type="Proteomes" id="UP000001988">
    <property type="component" value="Chromosome"/>
</dbReference>
<dbReference type="GO" id="GO:0005737">
    <property type="term" value="C:cytoplasm"/>
    <property type="evidence" value="ECO:0007669"/>
    <property type="project" value="UniProtKB-SubCell"/>
</dbReference>
<dbReference type="GO" id="GO:0005524">
    <property type="term" value="F:ATP binding"/>
    <property type="evidence" value="ECO:0007669"/>
    <property type="project" value="UniProtKB-UniRule"/>
</dbReference>
<dbReference type="GO" id="GO:0046872">
    <property type="term" value="F:metal ion binding"/>
    <property type="evidence" value="ECO:0007669"/>
    <property type="project" value="UniProtKB-KW"/>
</dbReference>
<dbReference type="GO" id="GO:0004829">
    <property type="term" value="F:threonine-tRNA ligase activity"/>
    <property type="evidence" value="ECO:0007669"/>
    <property type="project" value="UniProtKB-UniRule"/>
</dbReference>
<dbReference type="GO" id="GO:0000049">
    <property type="term" value="F:tRNA binding"/>
    <property type="evidence" value="ECO:0007669"/>
    <property type="project" value="UniProtKB-KW"/>
</dbReference>
<dbReference type="GO" id="GO:0006435">
    <property type="term" value="P:threonyl-tRNA aminoacylation"/>
    <property type="evidence" value="ECO:0007669"/>
    <property type="project" value="UniProtKB-UniRule"/>
</dbReference>
<dbReference type="CDD" id="cd00860">
    <property type="entry name" value="ThrRS_anticodon"/>
    <property type="match status" value="1"/>
</dbReference>
<dbReference type="CDD" id="cd00771">
    <property type="entry name" value="ThrRS_core"/>
    <property type="match status" value="1"/>
</dbReference>
<dbReference type="FunFam" id="3.30.54.20:FF:000003">
    <property type="entry name" value="Threonine--tRNA ligase"/>
    <property type="match status" value="1"/>
</dbReference>
<dbReference type="FunFam" id="3.30.930.10:FF:000019">
    <property type="entry name" value="Threonine--tRNA ligase"/>
    <property type="match status" value="1"/>
</dbReference>
<dbReference type="FunFam" id="3.40.50.800:FF:000001">
    <property type="entry name" value="Threonine--tRNA ligase"/>
    <property type="match status" value="1"/>
</dbReference>
<dbReference type="FunFam" id="3.30.980.10:FF:000005">
    <property type="entry name" value="Threonyl-tRNA synthetase, mitochondrial"/>
    <property type="match status" value="1"/>
</dbReference>
<dbReference type="Gene3D" id="3.30.54.20">
    <property type="match status" value="1"/>
</dbReference>
<dbReference type="Gene3D" id="3.40.50.800">
    <property type="entry name" value="Anticodon-binding domain"/>
    <property type="match status" value="1"/>
</dbReference>
<dbReference type="Gene3D" id="3.30.930.10">
    <property type="entry name" value="Bira Bifunctional Protein, Domain 2"/>
    <property type="match status" value="1"/>
</dbReference>
<dbReference type="Gene3D" id="3.30.980.10">
    <property type="entry name" value="Threonyl-trna Synthetase, Chain A, domain 2"/>
    <property type="match status" value="1"/>
</dbReference>
<dbReference type="HAMAP" id="MF_00184">
    <property type="entry name" value="Thr_tRNA_synth"/>
    <property type="match status" value="1"/>
</dbReference>
<dbReference type="InterPro" id="IPR002314">
    <property type="entry name" value="aa-tRNA-synt_IIb"/>
</dbReference>
<dbReference type="InterPro" id="IPR006195">
    <property type="entry name" value="aa-tRNA-synth_II"/>
</dbReference>
<dbReference type="InterPro" id="IPR045864">
    <property type="entry name" value="aa-tRNA-synth_II/BPL/LPL"/>
</dbReference>
<dbReference type="InterPro" id="IPR004154">
    <property type="entry name" value="Anticodon-bd"/>
</dbReference>
<dbReference type="InterPro" id="IPR036621">
    <property type="entry name" value="Anticodon-bd_dom_sf"/>
</dbReference>
<dbReference type="InterPro" id="IPR004095">
    <property type="entry name" value="TGS"/>
</dbReference>
<dbReference type="InterPro" id="IPR002320">
    <property type="entry name" value="Thr-tRNA-ligase_IIa"/>
</dbReference>
<dbReference type="InterPro" id="IPR018163">
    <property type="entry name" value="Thr/Ala-tRNA-synth_IIc_edit"/>
</dbReference>
<dbReference type="InterPro" id="IPR047246">
    <property type="entry name" value="ThrRS_anticodon"/>
</dbReference>
<dbReference type="InterPro" id="IPR033728">
    <property type="entry name" value="ThrRS_core"/>
</dbReference>
<dbReference type="InterPro" id="IPR012947">
    <property type="entry name" value="tRNA_SAD"/>
</dbReference>
<dbReference type="NCBIfam" id="TIGR00418">
    <property type="entry name" value="thrS"/>
    <property type="match status" value="1"/>
</dbReference>
<dbReference type="PANTHER" id="PTHR11451:SF44">
    <property type="entry name" value="THREONINE--TRNA LIGASE, CHLOROPLASTIC_MITOCHONDRIAL 2"/>
    <property type="match status" value="1"/>
</dbReference>
<dbReference type="PANTHER" id="PTHR11451">
    <property type="entry name" value="THREONINE-TRNA LIGASE"/>
    <property type="match status" value="1"/>
</dbReference>
<dbReference type="Pfam" id="PF03129">
    <property type="entry name" value="HGTP_anticodon"/>
    <property type="match status" value="1"/>
</dbReference>
<dbReference type="Pfam" id="PF00587">
    <property type="entry name" value="tRNA-synt_2b"/>
    <property type="match status" value="1"/>
</dbReference>
<dbReference type="Pfam" id="PF07973">
    <property type="entry name" value="tRNA_SAD"/>
    <property type="match status" value="1"/>
</dbReference>
<dbReference type="PRINTS" id="PR01047">
    <property type="entry name" value="TRNASYNTHTHR"/>
</dbReference>
<dbReference type="SMART" id="SM00863">
    <property type="entry name" value="tRNA_SAD"/>
    <property type="match status" value="1"/>
</dbReference>
<dbReference type="SUPFAM" id="SSF52954">
    <property type="entry name" value="Class II aaRS ABD-related"/>
    <property type="match status" value="1"/>
</dbReference>
<dbReference type="SUPFAM" id="SSF55681">
    <property type="entry name" value="Class II aaRS and biotin synthetases"/>
    <property type="match status" value="1"/>
</dbReference>
<dbReference type="SUPFAM" id="SSF55186">
    <property type="entry name" value="ThrRS/AlaRS common domain"/>
    <property type="match status" value="1"/>
</dbReference>
<dbReference type="PROSITE" id="PS50862">
    <property type="entry name" value="AA_TRNA_LIGASE_II"/>
    <property type="match status" value="1"/>
</dbReference>
<dbReference type="PROSITE" id="PS51880">
    <property type="entry name" value="TGS"/>
    <property type="match status" value="1"/>
</dbReference>
<proteinExistence type="inferred from homology"/>